<sequence>MPVNMVSASEYRRILVSDHPIMDARAPVEFTKGAFPASRNHPLMEDEERRLVGTCYKQNGQQAAIDLGHSLVTGEIKQQRLDAWQRYFTKHPDAYLYCFRGGLRSKLTQQWLKEAGIDVPFIEGGYKAMRQFLIETIDNAASQNPMLILSGITGSGKTDFLLARNDSVDLEGIAHHRGSSFGRYHEPQPTQINFENALAVALLKHQDSQAKHLLLEDESFLIGRSALPQAFYKGMQQANVVVLEEPMEARLTRLLNEYVHKMHSGYIQRLGEEAGFAAFAEYLALSITGIKKRLGGKQHDEFQAIITNALNIQQSRGDTSAHIEWIELLLSKYYDPMYQYQIDKKAERILFKGDHLAMHQWLDAN</sequence>
<accession>B8CH52</accession>
<organism>
    <name type="scientific">Shewanella piezotolerans (strain WP3 / JCM 13877)</name>
    <dbReference type="NCBI Taxonomy" id="225849"/>
    <lineage>
        <taxon>Bacteria</taxon>
        <taxon>Pseudomonadati</taxon>
        <taxon>Pseudomonadota</taxon>
        <taxon>Gammaproteobacteria</taxon>
        <taxon>Alteromonadales</taxon>
        <taxon>Shewanellaceae</taxon>
        <taxon>Shewanella</taxon>
    </lineage>
</organism>
<gene>
    <name evidence="1" type="primary">selU</name>
    <name type="ordered locus">swp_0202</name>
</gene>
<evidence type="ECO:0000255" key="1">
    <source>
        <dbReference type="HAMAP-Rule" id="MF_01622"/>
    </source>
</evidence>
<dbReference type="EC" id="2.9.1.3" evidence="1"/>
<dbReference type="EMBL" id="CP000472">
    <property type="protein sequence ID" value="ACJ27045.1"/>
    <property type="molecule type" value="Genomic_DNA"/>
</dbReference>
<dbReference type="RefSeq" id="WP_020910429.1">
    <property type="nucleotide sequence ID" value="NC_011566.1"/>
</dbReference>
<dbReference type="SMR" id="B8CH52"/>
<dbReference type="STRING" id="225849.swp_0202"/>
<dbReference type="KEGG" id="swp:swp_0202"/>
<dbReference type="eggNOG" id="COG2603">
    <property type="taxonomic scope" value="Bacteria"/>
</dbReference>
<dbReference type="HOGENOM" id="CLU_043456_1_0_6"/>
<dbReference type="OrthoDB" id="9808735at2"/>
<dbReference type="Proteomes" id="UP000000753">
    <property type="component" value="Chromosome"/>
</dbReference>
<dbReference type="GO" id="GO:0016765">
    <property type="term" value="F:transferase activity, transferring alkyl or aryl (other than methyl) groups"/>
    <property type="evidence" value="ECO:0007669"/>
    <property type="project" value="UniProtKB-UniRule"/>
</dbReference>
<dbReference type="GO" id="GO:0043828">
    <property type="term" value="F:tRNA 2-selenouridine synthase activity"/>
    <property type="evidence" value="ECO:0007669"/>
    <property type="project" value="UniProtKB-EC"/>
</dbReference>
<dbReference type="GO" id="GO:0002098">
    <property type="term" value="P:tRNA wobble uridine modification"/>
    <property type="evidence" value="ECO:0007669"/>
    <property type="project" value="UniProtKB-UniRule"/>
</dbReference>
<dbReference type="Gene3D" id="3.40.250.10">
    <property type="entry name" value="Rhodanese-like domain"/>
    <property type="match status" value="1"/>
</dbReference>
<dbReference type="HAMAP" id="MF_01622">
    <property type="entry name" value="tRNA_sel_U_synth"/>
    <property type="match status" value="1"/>
</dbReference>
<dbReference type="InterPro" id="IPR001763">
    <property type="entry name" value="Rhodanese-like_dom"/>
</dbReference>
<dbReference type="InterPro" id="IPR036873">
    <property type="entry name" value="Rhodanese-like_dom_sf"/>
</dbReference>
<dbReference type="InterPro" id="IPR017582">
    <property type="entry name" value="SelU"/>
</dbReference>
<dbReference type="NCBIfam" id="NF008750">
    <property type="entry name" value="PRK11784.1-2"/>
    <property type="match status" value="1"/>
</dbReference>
<dbReference type="NCBIfam" id="NF008751">
    <property type="entry name" value="PRK11784.1-3"/>
    <property type="match status" value="1"/>
</dbReference>
<dbReference type="NCBIfam" id="TIGR03167">
    <property type="entry name" value="tRNA_sel_U_synt"/>
    <property type="match status" value="1"/>
</dbReference>
<dbReference type="PANTHER" id="PTHR30401">
    <property type="entry name" value="TRNA 2-SELENOURIDINE SYNTHASE"/>
    <property type="match status" value="1"/>
</dbReference>
<dbReference type="PANTHER" id="PTHR30401:SF0">
    <property type="entry name" value="TRNA 2-SELENOURIDINE SYNTHASE"/>
    <property type="match status" value="1"/>
</dbReference>
<dbReference type="SMART" id="SM00450">
    <property type="entry name" value="RHOD"/>
    <property type="match status" value="1"/>
</dbReference>
<dbReference type="SUPFAM" id="SSF52821">
    <property type="entry name" value="Rhodanese/Cell cycle control phosphatase"/>
    <property type="match status" value="1"/>
</dbReference>
<dbReference type="PROSITE" id="PS50206">
    <property type="entry name" value="RHODANESE_3"/>
    <property type="match status" value="1"/>
</dbReference>
<feature type="chain" id="PRO_1000186089" description="tRNA 2-selenouridine synthase">
    <location>
        <begin position="1"/>
        <end position="365"/>
    </location>
</feature>
<feature type="domain" description="Rhodanese" evidence="1">
    <location>
        <begin position="15"/>
        <end position="138"/>
    </location>
</feature>
<feature type="active site" description="S-selanylcysteine intermediate" evidence="1">
    <location>
        <position position="98"/>
    </location>
</feature>
<reference key="1">
    <citation type="journal article" date="2008" name="PLoS ONE">
        <title>Environmental adaptation: genomic analysis of the piezotolerant and psychrotolerant deep-sea iron reducing bacterium Shewanella piezotolerans WP3.</title>
        <authorList>
            <person name="Wang F."/>
            <person name="Wang J."/>
            <person name="Jian H."/>
            <person name="Zhang B."/>
            <person name="Li S."/>
            <person name="Wang F."/>
            <person name="Zeng X."/>
            <person name="Gao L."/>
            <person name="Bartlett D.H."/>
            <person name="Yu J."/>
            <person name="Hu S."/>
            <person name="Xiao X."/>
        </authorList>
    </citation>
    <scope>NUCLEOTIDE SEQUENCE [LARGE SCALE GENOMIC DNA]</scope>
    <source>
        <strain>WP3 / JCM 13877</strain>
    </source>
</reference>
<name>SELU_SHEPW</name>
<keyword id="KW-0711">Selenium</keyword>
<keyword id="KW-0808">Transferase</keyword>
<comment type="function">
    <text evidence="1">Involved in the post-transcriptional modification of the uridine at the wobble position (U34) of tRNA(Lys), tRNA(Glu) and tRNA(Gln). Catalyzes the conversion of 2-thiouridine (S2U-RNA) to 2-selenouridine (Se2U-RNA). Acts in a two-step process involving geranylation of 2-thiouridine (S2U) to S-geranyl-2-thiouridine (geS2U) and subsequent selenation of the latter derivative to 2-selenouridine (Se2U) in the tRNA chain.</text>
</comment>
<comment type="catalytic activity">
    <reaction evidence="1">
        <text>5-methylaminomethyl-2-thiouridine(34) in tRNA + selenophosphate + (2E)-geranyl diphosphate + H2O + H(+) = 5-methylaminomethyl-2-selenouridine(34) in tRNA + (2E)-thiogeraniol + phosphate + diphosphate</text>
        <dbReference type="Rhea" id="RHEA:42716"/>
        <dbReference type="Rhea" id="RHEA-COMP:10195"/>
        <dbReference type="Rhea" id="RHEA-COMP:10196"/>
        <dbReference type="ChEBI" id="CHEBI:15377"/>
        <dbReference type="ChEBI" id="CHEBI:15378"/>
        <dbReference type="ChEBI" id="CHEBI:16144"/>
        <dbReference type="ChEBI" id="CHEBI:33019"/>
        <dbReference type="ChEBI" id="CHEBI:43474"/>
        <dbReference type="ChEBI" id="CHEBI:58057"/>
        <dbReference type="ChEBI" id="CHEBI:74455"/>
        <dbReference type="ChEBI" id="CHEBI:82743"/>
        <dbReference type="ChEBI" id="CHEBI:143703"/>
        <dbReference type="EC" id="2.9.1.3"/>
    </reaction>
    <physiologicalReaction direction="left-to-right" evidence="1">
        <dbReference type="Rhea" id="RHEA:42717"/>
    </physiologicalReaction>
</comment>
<comment type="catalytic activity">
    <reaction evidence="1">
        <text>5-methylaminomethyl-2-thiouridine(34) in tRNA + (2E)-geranyl diphosphate = 5-methylaminomethyl-S-(2E)-geranyl-thiouridine(34) in tRNA + diphosphate</text>
        <dbReference type="Rhea" id="RHEA:14085"/>
        <dbReference type="Rhea" id="RHEA-COMP:10195"/>
        <dbReference type="Rhea" id="RHEA-COMP:14654"/>
        <dbReference type="ChEBI" id="CHEBI:33019"/>
        <dbReference type="ChEBI" id="CHEBI:58057"/>
        <dbReference type="ChEBI" id="CHEBI:74455"/>
        <dbReference type="ChEBI" id="CHEBI:140632"/>
    </reaction>
    <physiologicalReaction direction="left-to-right" evidence="1">
        <dbReference type="Rhea" id="RHEA:14086"/>
    </physiologicalReaction>
</comment>
<comment type="catalytic activity">
    <reaction evidence="1">
        <text>5-methylaminomethyl-S-(2E)-geranyl-thiouridine(34) in tRNA + selenophosphate + H(+) = 5-methylaminomethyl-2-(Se-phospho)selenouridine(34) in tRNA + (2E)-thiogeraniol</text>
        <dbReference type="Rhea" id="RHEA:60172"/>
        <dbReference type="Rhea" id="RHEA-COMP:14654"/>
        <dbReference type="Rhea" id="RHEA-COMP:15523"/>
        <dbReference type="ChEBI" id="CHEBI:15378"/>
        <dbReference type="ChEBI" id="CHEBI:16144"/>
        <dbReference type="ChEBI" id="CHEBI:140632"/>
        <dbReference type="ChEBI" id="CHEBI:143702"/>
        <dbReference type="ChEBI" id="CHEBI:143703"/>
    </reaction>
    <physiologicalReaction direction="left-to-right" evidence="1">
        <dbReference type="Rhea" id="RHEA:60173"/>
    </physiologicalReaction>
</comment>
<comment type="catalytic activity">
    <reaction evidence="1">
        <text>5-methylaminomethyl-2-(Se-phospho)selenouridine(34) in tRNA + H2O = 5-methylaminomethyl-2-selenouridine(34) in tRNA + phosphate</text>
        <dbReference type="Rhea" id="RHEA:60176"/>
        <dbReference type="Rhea" id="RHEA-COMP:10196"/>
        <dbReference type="Rhea" id="RHEA-COMP:15523"/>
        <dbReference type="ChEBI" id="CHEBI:15377"/>
        <dbReference type="ChEBI" id="CHEBI:43474"/>
        <dbReference type="ChEBI" id="CHEBI:82743"/>
        <dbReference type="ChEBI" id="CHEBI:143702"/>
    </reaction>
    <physiologicalReaction direction="left-to-right" evidence="1">
        <dbReference type="Rhea" id="RHEA:60177"/>
    </physiologicalReaction>
</comment>
<comment type="subunit">
    <text evidence="1">Monomer.</text>
</comment>
<comment type="similarity">
    <text evidence="1">Belongs to the SelU family.</text>
</comment>
<proteinExistence type="inferred from homology"/>
<protein>
    <recommendedName>
        <fullName evidence="1">tRNA 2-selenouridine synthase</fullName>
        <ecNumber evidence="1">2.9.1.3</ecNumber>
    </recommendedName>
</protein>